<proteinExistence type="evidence at transcript level"/>
<comment type="function">
    <text evidence="3">Required for the specification of the hindgut and anal pads.</text>
</comment>
<comment type="subcellular location">
    <subcellularLocation>
        <location evidence="1">Nucleus</location>
    </subcellularLocation>
</comment>
<comment type="developmental stage">
    <text evidence="3">First expressed at the beginning of nuclear cycle 14 in the posterior terminal region. As cellularization proceeds, expression becomes confined to a ring area encompassing the primordium of the hindgut and anal pads. Expression is maintained in this region until the end of embryogenesis.</text>
</comment>
<evidence type="ECO:0000255" key="1">
    <source>
        <dbReference type="PROSITE-ProRule" id="PRU00201"/>
    </source>
</evidence>
<evidence type="ECO:0000256" key="2">
    <source>
        <dbReference type="SAM" id="MobiDB-lite"/>
    </source>
</evidence>
<evidence type="ECO:0000269" key="3">
    <source>
    </source>
</evidence>
<evidence type="ECO:0000305" key="4"/>
<keyword id="KW-0217">Developmental protein</keyword>
<keyword id="KW-0238">DNA-binding</keyword>
<keyword id="KW-0539">Nucleus</keyword>
<keyword id="KW-1185">Reference proteome</keyword>
<keyword id="KW-0804">Transcription</keyword>
<keyword id="KW-0805">Transcription regulation</keyword>
<reference key="1">
    <citation type="journal article" date="1994" name="Genes Dev.">
        <title>Homologs of the mouse Brachyury gene are involved in the specification of posterior terminal structures in Drosophila, Tribolium, and Locusta.</title>
        <authorList>
            <person name="Kispert A."/>
            <person name="Herrmann B.G."/>
            <person name="Leptin M."/>
            <person name="Reuter R."/>
        </authorList>
    </citation>
    <scope>NUCLEOTIDE SEQUENCE [MRNA]</scope>
    <scope>FUNCTION</scope>
    <scope>DEVELOPMENTAL STAGE</scope>
    <source>
        <tissue>Embryo</tissue>
    </source>
</reference>
<reference key="2">
    <citation type="journal article" date="2000" name="Science">
        <title>The genome sequence of Drosophila melanogaster.</title>
        <authorList>
            <person name="Adams M.D."/>
            <person name="Celniker S.E."/>
            <person name="Holt R.A."/>
            <person name="Evans C.A."/>
            <person name="Gocayne J.D."/>
            <person name="Amanatides P.G."/>
            <person name="Scherer S.E."/>
            <person name="Li P.W."/>
            <person name="Hoskins R.A."/>
            <person name="Galle R.F."/>
            <person name="George R.A."/>
            <person name="Lewis S.E."/>
            <person name="Richards S."/>
            <person name="Ashburner M."/>
            <person name="Henderson S.N."/>
            <person name="Sutton G.G."/>
            <person name="Wortman J.R."/>
            <person name="Yandell M.D."/>
            <person name="Zhang Q."/>
            <person name="Chen L.X."/>
            <person name="Brandon R.C."/>
            <person name="Rogers Y.-H.C."/>
            <person name="Blazej R.G."/>
            <person name="Champe M."/>
            <person name="Pfeiffer B.D."/>
            <person name="Wan K.H."/>
            <person name="Doyle C."/>
            <person name="Baxter E.G."/>
            <person name="Helt G."/>
            <person name="Nelson C.R."/>
            <person name="Miklos G.L.G."/>
            <person name="Abril J.F."/>
            <person name="Agbayani A."/>
            <person name="An H.-J."/>
            <person name="Andrews-Pfannkoch C."/>
            <person name="Baldwin D."/>
            <person name="Ballew R.M."/>
            <person name="Basu A."/>
            <person name="Baxendale J."/>
            <person name="Bayraktaroglu L."/>
            <person name="Beasley E.M."/>
            <person name="Beeson K.Y."/>
            <person name="Benos P.V."/>
            <person name="Berman B.P."/>
            <person name="Bhandari D."/>
            <person name="Bolshakov S."/>
            <person name="Borkova D."/>
            <person name="Botchan M.R."/>
            <person name="Bouck J."/>
            <person name="Brokstein P."/>
            <person name="Brottier P."/>
            <person name="Burtis K.C."/>
            <person name="Busam D.A."/>
            <person name="Butler H."/>
            <person name="Cadieu E."/>
            <person name="Center A."/>
            <person name="Chandra I."/>
            <person name="Cherry J.M."/>
            <person name="Cawley S."/>
            <person name="Dahlke C."/>
            <person name="Davenport L.B."/>
            <person name="Davies P."/>
            <person name="de Pablos B."/>
            <person name="Delcher A."/>
            <person name="Deng Z."/>
            <person name="Mays A.D."/>
            <person name="Dew I."/>
            <person name="Dietz S.M."/>
            <person name="Dodson K."/>
            <person name="Doup L.E."/>
            <person name="Downes M."/>
            <person name="Dugan-Rocha S."/>
            <person name="Dunkov B.C."/>
            <person name="Dunn P."/>
            <person name="Durbin K.J."/>
            <person name="Evangelista C.C."/>
            <person name="Ferraz C."/>
            <person name="Ferriera S."/>
            <person name="Fleischmann W."/>
            <person name="Fosler C."/>
            <person name="Gabrielian A.E."/>
            <person name="Garg N.S."/>
            <person name="Gelbart W.M."/>
            <person name="Glasser K."/>
            <person name="Glodek A."/>
            <person name="Gong F."/>
            <person name="Gorrell J.H."/>
            <person name="Gu Z."/>
            <person name="Guan P."/>
            <person name="Harris M."/>
            <person name="Harris N.L."/>
            <person name="Harvey D.A."/>
            <person name="Heiman T.J."/>
            <person name="Hernandez J.R."/>
            <person name="Houck J."/>
            <person name="Hostin D."/>
            <person name="Houston K.A."/>
            <person name="Howland T.J."/>
            <person name="Wei M.-H."/>
            <person name="Ibegwam C."/>
            <person name="Jalali M."/>
            <person name="Kalush F."/>
            <person name="Karpen G.H."/>
            <person name="Ke Z."/>
            <person name="Kennison J.A."/>
            <person name="Ketchum K.A."/>
            <person name="Kimmel B.E."/>
            <person name="Kodira C.D."/>
            <person name="Kraft C.L."/>
            <person name="Kravitz S."/>
            <person name="Kulp D."/>
            <person name="Lai Z."/>
            <person name="Lasko P."/>
            <person name="Lei Y."/>
            <person name="Levitsky A.A."/>
            <person name="Li J.H."/>
            <person name="Li Z."/>
            <person name="Liang Y."/>
            <person name="Lin X."/>
            <person name="Liu X."/>
            <person name="Mattei B."/>
            <person name="McIntosh T.C."/>
            <person name="McLeod M.P."/>
            <person name="McPherson D."/>
            <person name="Merkulov G."/>
            <person name="Milshina N.V."/>
            <person name="Mobarry C."/>
            <person name="Morris J."/>
            <person name="Moshrefi A."/>
            <person name="Mount S.M."/>
            <person name="Moy M."/>
            <person name="Murphy B."/>
            <person name="Murphy L."/>
            <person name="Muzny D.M."/>
            <person name="Nelson D.L."/>
            <person name="Nelson D.R."/>
            <person name="Nelson K.A."/>
            <person name="Nixon K."/>
            <person name="Nusskern D.R."/>
            <person name="Pacleb J.M."/>
            <person name="Palazzolo M."/>
            <person name="Pittman G.S."/>
            <person name="Pan S."/>
            <person name="Pollard J."/>
            <person name="Puri V."/>
            <person name="Reese M.G."/>
            <person name="Reinert K."/>
            <person name="Remington K."/>
            <person name="Saunders R.D.C."/>
            <person name="Scheeler F."/>
            <person name="Shen H."/>
            <person name="Shue B.C."/>
            <person name="Siden-Kiamos I."/>
            <person name="Simpson M."/>
            <person name="Skupski M.P."/>
            <person name="Smith T.J."/>
            <person name="Spier E."/>
            <person name="Spradling A.C."/>
            <person name="Stapleton M."/>
            <person name="Strong R."/>
            <person name="Sun E."/>
            <person name="Svirskas R."/>
            <person name="Tector C."/>
            <person name="Turner R."/>
            <person name="Venter E."/>
            <person name="Wang A.H."/>
            <person name="Wang X."/>
            <person name="Wang Z.-Y."/>
            <person name="Wassarman D.A."/>
            <person name="Weinstock G.M."/>
            <person name="Weissenbach J."/>
            <person name="Williams S.M."/>
            <person name="Woodage T."/>
            <person name="Worley K.C."/>
            <person name="Wu D."/>
            <person name="Yang S."/>
            <person name="Yao Q.A."/>
            <person name="Ye J."/>
            <person name="Yeh R.-F."/>
            <person name="Zaveri J.S."/>
            <person name="Zhan M."/>
            <person name="Zhang G."/>
            <person name="Zhao Q."/>
            <person name="Zheng L."/>
            <person name="Zheng X.H."/>
            <person name="Zhong F.N."/>
            <person name="Zhong W."/>
            <person name="Zhou X."/>
            <person name="Zhu S.C."/>
            <person name="Zhu X."/>
            <person name="Smith H.O."/>
            <person name="Gibbs R.A."/>
            <person name="Myers E.W."/>
            <person name="Rubin G.M."/>
            <person name="Venter J.C."/>
        </authorList>
    </citation>
    <scope>NUCLEOTIDE SEQUENCE [LARGE SCALE GENOMIC DNA]</scope>
    <source>
        <strain>Berkeley</strain>
    </source>
</reference>
<reference key="3">
    <citation type="journal article" date="2002" name="Genome Biol.">
        <title>Annotation of the Drosophila melanogaster euchromatic genome: a systematic review.</title>
        <authorList>
            <person name="Misra S."/>
            <person name="Crosby M.A."/>
            <person name="Mungall C.J."/>
            <person name="Matthews B.B."/>
            <person name="Campbell K.S."/>
            <person name="Hradecky P."/>
            <person name="Huang Y."/>
            <person name="Kaminker J.S."/>
            <person name="Millburn G.H."/>
            <person name="Prochnik S.E."/>
            <person name="Smith C.D."/>
            <person name="Tupy J.L."/>
            <person name="Whitfield E.J."/>
            <person name="Bayraktaroglu L."/>
            <person name="Berman B.P."/>
            <person name="Bettencourt B.R."/>
            <person name="Celniker S.E."/>
            <person name="de Grey A.D.N.J."/>
            <person name="Drysdale R.A."/>
            <person name="Harris N.L."/>
            <person name="Richter J."/>
            <person name="Russo S."/>
            <person name="Schroeder A.J."/>
            <person name="Shu S.Q."/>
            <person name="Stapleton M."/>
            <person name="Yamada C."/>
            <person name="Ashburner M."/>
            <person name="Gelbart W.M."/>
            <person name="Rubin G.M."/>
            <person name="Lewis S.E."/>
        </authorList>
    </citation>
    <scope>GENOME REANNOTATION</scope>
    <source>
        <strain>Berkeley</strain>
    </source>
</reference>
<gene>
    <name type="primary">byn</name>
    <name type="synonym">trg</name>
    <name type="ORF">CG7260</name>
</gene>
<organism>
    <name type="scientific">Drosophila melanogaster</name>
    <name type="common">Fruit fly</name>
    <dbReference type="NCBI Taxonomy" id="7227"/>
    <lineage>
        <taxon>Eukaryota</taxon>
        <taxon>Metazoa</taxon>
        <taxon>Ecdysozoa</taxon>
        <taxon>Arthropoda</taxon>
        <taxon>Hexapoda</taxon>
        <taxon>Insecta</taxon>
        <taxon>Pterygota</taxon>
        <taxon>Neoptera</taxon>
        <taxon>Endopterygota</taxon>
        <taxon>Diptera</taxon>
        <taxon>Brachycera</taxon>
        <taxon>Muscomorpha</taxon>
        <taxon>Ephydroidea</taxon>
        <taxon>Drosophilidae</taxon>
        <taxon>Drosophila</taxon>
        <taxon>Sophophora</taxon>
    </lineage>
</organism>
<name>BYN_DROME</name>
<accession>P55965</accession>
<accession>Q9VTQ7</accession>
<dbReference type="EMBL" id="S74163">
    <property type="protein sequence ID" value="AAB32396.2"/>
    <property type="molecule type" value="mRNA"/>
</dbReference>
<dbReference type="EMBL" id="AE014296">
    <property type="protein sequence ID" value="AAF49989.2"/>
    <property type="molecule type" value="Genomic_DNA"/>
</dbReference>
<dbReference type="PIR" id="A55160">
    <property type="entry name" value="A55160"/>
</dbReference>
<dbReference type="RefSeq" id="NP_524031.2">
    <property type="nucleotide sequence ID" value="NM_079307.2"/>
</dbReference>
<dbReference type="SMR" id="P55965"/>
<dbReference type="BioGRID" id="64710">
    <property type="interactions" value="5"/>
</dbReference>
<dbReference type="FunCoup" id="P55965">
    <property type="interactions" value="17"/>
</dbReference>
<dbReference type="IntAct" id="P55965">
    <property type="interactions" value="1"/>
</dbReference>
<dbReference type="STRING" id="7227.FBpp0304380"/>
<dbReference type="GlyGen" id="P55965">
    <property type="glycosylation" value="1 site"/>
</dbReference>
<dbReference type="PaxDb" id="7227-FBpp0304380"/>
<dbReference type="EnsemblMetazoa" id="FBtr0332070">
    <property type="protein sequence ID" value="FBpp0304380"/>
    <property type="gene ID" value="FBgn0011723"/>
</dbReference>
<dbReference type="GeneID" id="39349"/>
<dbReference type="KEGG" id="dme:Dmel_CG7260"/>
<dbReference type="AGR" id="FB:FBgn0011723"/>
<dbReference type="CTD" id="39349"/>
<dbReference type="FlyBase" id="FBgn0011723">
    <property type="gene designation" value="byn"/>
</dbReference>
<dbReference type="VEuPathDB" id="VectorBase:FBgn0011723"/>
<dbReference type="eggNOG" id="KOG3585">
    <property type="taxonomic scope" value="Eukaryota"/>
</dbReference>
<dbReference type="InParanoid" id="P55965"/>
<dbReference type="OMA" id="AMYKPSD"/>
<dbReference type="OrthoDB" id="7442607at2759"/>
<dbReference type="PhylomeDB" id="P55965"/>
<dbReference type="BioGRID-ORCS" id="39349">
    <property type="hits" value="0 hits in 3 CRISPR screens"/>
</dbReference>
<dbReference type="GenomeRNAi" id="39349"/>
<dbReference type="PRO" id="PR:P55965"/>
<dbReference type="Proteomes" id="UP000000803">
    <property type="component" value="Chromosome 3L"/>
</dbReference>
<dbReference type="Bgee" id="FBgn0011723">
    <property type="expression patterns" value="Expressed in adult hindgut (Drosophila) and 12 other cell types or tissues"/>
</dbReference>
<dbReference type="ExpressionAtlas" id="P55965">
    <property type="expression patterns" value="baseline and differential"/>
</dbReference>
<dbReference type="GO" id="GO:0000785">
    <property type="term" value="C:chromatin"/>
    <property type="evidence" value="ECO:0000318"/>
    <property type="project" value="GO_Central"/>
</dbReference>
<dbReference type="GO" id="GO:0005634">
    <property type="term" value="C:nucleus"/>
    <property type="evidence" value="ECO:0000314"/>
    <property type="project" value="FlyBase"/>
</dbReference>
<dbReference type="GO" id="GO:0003677">
    <property type="term" value="F:DNA binding"/>
    <property type="evidence" value="ECO:0000250"/>
    <property type="project" value="FlyBase"/>
</dbReference>
<dbReference type="GO" id="GO:0000981">
    <property type="term" value="F:DNA-binding transcription factor activity, RNA polymerase II-specific"/>
    <property type="evidence" value="ECO:0000314"/>
    <property type="project" value="FlyBase"/>
</dbReference>
<dbReference type="GO" id="GO:0042803">
    <property type="term" value="F:protein homodimerization activity"/>
    <property type="evidence" value="ECO:0000353"/>
    <property type="project" value="FlyBase"/>
</dbReference>
<dbReference type="GO" id="GO:0000978">
    <property type="term" value="F:RNA polymerase II cis-regulatory region sequence-specific DNA binding"/>
    <property type="evidence" value="ECO:0000318"/>
    <property type="project" value="GO_Central"/>
</dbReference>
<dbReference type="GO" id="GO:0001709">
    <property type="term" value="P:cell fate determination"/>
    <property type="evidence" value="ECO:0000304"/>
    <property type="project" value="FlyBase"/>
</dbReference>
<dbReference type="GO" id="GO:0001708">
    <property type="term" value="P:cell fate specification"/>
    <property type="evidence" value="ECO:0000318"/>
    <property type="project" value="GO_Central"/>
</dbReference>
<dbReference type="GO" id="GO:0008354">
    <property type="term" value="P:germ cell migration"/>
    <property type="evidence" value="ECO:0000304"/>
    <property type="project" value="FlyBase"/>
</dbReference>
<dbReference type="GO" id="GO:0003007">
    <property type="term" value="P:heart morphogenesis"/>
    <property type="evidence" value="ECO:0000318"/>
    <property type="project" value="GO_Central"/>
</dbReference>
<dbReference type="GO" id="GO:0007442">
    <property type="term" value="P:hindgut morphogenesis"/>
    <property type="evidence" value="ECO:0000315"/>
    <property type="project" value="FlyBase"/>
</dbReference>
<dbReference type="GO" id="GO:0007443">
    <property type="term" value="P:Malpighian tubule morphogenesis"/>
    <property type="evidence" value="ECO:0000315"/>
    <property type="project" value="FlyBase"/>
</dbReference>
<dbReference type="GO" id="GO:0001707">
    <property type="term" value="P:mesoderm formation"/>
    <property type="evidence" value="ECO:0000318"/>
    <property type="project" value="GO_Central"/>
</dbReference>
<dbReference type="GO" id="GO:0007509">
    <property type="term" value="P:mesoderm migration involved in gastrulation"/>
    <property type="evidence" value="ECO:0000304"/>
    <property type="project" value="FlyBase"/>
</dbReference>
<dbReference type="GO" id="GO:0007494">
    <property type="term" value="P:midgut development"/>
    <property type="evidence" value="ECO:0000315"/>
    <property type="project" value="FlyBase"/>
</dbReference>
<dbReference type="GO" id="GO:0045944">
    <property type="term" value="P:positive regulation of transcription by RNA polymerase II"/>
    <property type="evidence" value="ECO:0000314"/>
    <property type="project" value="FlyBase"/>
</dbReference>
<dbReference type="GO" id="GO:0006357">
    <property type="term" value="P:regulation of transcription by RNA polymerase II"/>
    <property type="evidence" value="ECO:0000318"/>
    <property type="project" value="GO_Central"/>
</dbReference>
<dbReference type="CDD" id="cd20192">
    <property type="entry name" value="T-box_TBXT_TBX19-like"/>
    <property type="match status" value="1"/>
</dbReference>
<dbReference type="FunFam" id="2.60.40.820:FF:000002">
    <property type="entry name" value="T-box transcription factor Brachyury"/>
    <property type="match status" value="1"/>
</dbReference>
<dbReference type="Gene3D" id="2.60.40.820">
    <property type="entry name" value="Transcription factor, T-box"/>
    <property type="match status" value="1"/>
</dbReference>
<dbReference type="InterPro" id="IPR008967">
    <property type="entry name" value="p53-like_TF_DNA-bd_sf"/>
</dbReference>
<dbReference type="InterPro" id="IPR046360">
    <property type="entry name" value="T-box_DNA-bd"/>
</dbReference>
<dbReference type="InterPro" id="IPR036960">
    <property type="entry name" value="T-box_sf"/>
</dbReference>
<dbReference type="InterPro" id="IPR002070">
    <property type="entry name" value="TF_Brachyury"/>
</dbReference>
<dbReference type="InterPro" id="IPR001699">
    <property type="entry name" value="TF_T-box"/>
</dbReference>
<dbReference type="InterPro" id="IPR018186">
    <property type="entry name" value="TF_T-box_CS"/>
</dbReference>
<dbReference type="PANTHER" id="PTHR11267">
    <property type="entry name" value="T-BOX PROTEIN-RELATED"/>
    <property type="match status" value="1"/>
</dbReference>
<dbReference type="PANTHER" id="PTHR11267:SF106">
    <property type="entry name" value="T-RELATED PROTEIN"/>
    <property type="match status" value="1"/>
</dbReference>
<dbReference type="Pfam" id="PF00907">
    <property type="entry name" value="T-box"/>
    <property type="match status" value="1"/>
</dbReference>
<dbReference type="PRINTS" id="PR00938">
    <property type="entry name" value="BRACHYURY"/>
</dbReference>
<dbReference type="PRINTS" id="PR00937">
    <property type="entry name" value="TBOX"/>
</dbReference>
<dbReference type="SMART" id="SM00425">
    <property type="entry name" value="TBOX"/>
    <property type="match status" value="1"/>
</dbReference>
<dbReference type="SUPFAM" id="SSF49417">
    <property type="entry name" value="p53-like transcription factors"/>
    <property type="match status" value="1"/>
</dbReference>
<dbReference type="PROSITE" id="PS01283">
    <property type="entry name" value="TBOX_1"/>
    <property type="match status" value="1"/>
</dbReference>
<dbReference type="PROSITE" id="PS01264">
    <property type="entry name" value="TBOX_2"/>
    <property type="match status" value="1"/>
</dbReference>
<dbReference type="PROSITE" id="PS50252">
    <property type="entry name" value="TBOX_3"/>
    <property type="match status" value="1"/>
</dbReference>
<protein>
    <recommendedName>
        <fullName>T-related protein</fullName>
        <shortName>Trp</shortName>
    </recommendedName>
    <alternativeName>
        <fullName>Protein brachyenteron</fullName>
    </alternativeName>
</protein>
<sequence length="697" mass="72117">MTTSHILSAVDPTTGLSGNVSGGGGGGGAGGGAGSGSPQHVTHNGHGHGHGLGGVAAVSGGGASVSGNGGHRVVGGAGSPNELDRNLRISLDDRELWLRFQNLTNEMIVTKNGRRMFPVVKISASGLDPAAMYTVLLEFVQIDSHRWKYVNGEWVPGGKAEVPPSNPIYVHPESPNFGAHWMKEPISFAKVKLTNKTNGNGQIMLNSLHKYEPRVHLVRVGSEQRHVVTYPFPETQFIAVTAYQNEEVTSLKIKYNPFAKAFLDAKERPDTLYPHDTHYGWLIPPPTHYTAAAAAVAAPPPLSIAQSHGLVASCPSVSSAESVGPSSGGSCDRYGRSLSSRSVAPTRTTPYSRPRVVSGSGSNGSAGNASSTSPQPPSAPQTPTSLHSTSTGSVSTSVSSSSGGGIGSAPSTGCFSSSYAQSGFMSVDASPTASVFSYPSSWQSNGNYWNATSVPGPMPMNVCSGRNISSHNSPSPTNGSPSYTTSSPSYTIHHLTPHSHQYNMAQTDIYGTGVGVGGGAGTTGSPQAAYGAAAHQVYHPTPTSPTHQLYTNAVLNAPSALSYSASGWHNGSGAEYGLYQNAAAAYYQPEYIPLEIGYATHPLEPVDVSKTLDDPQAAMYKPSDEQGSVITLECASSSLKSSHDIKIESSSLEHAGERGTVGGGAAVVSVPTAVVNGAPAVAADTWTPLTPPQSTLQ</sequence>
<feature type="chain" id="PRO_0000184467" description="T-related protein">
    <location>
        <begin position="1"/>
        <end position="697"/>
    </location>
</feature>
<feature type="DNA-binding region" description="T-box" evidence="1">
    <location>
        <begin position="96"/>
        <end position="264"/>
    </location>
</feature>
<feature type="region of interest" description="Disordered" evidence="2">
    <location>
        <begin position="1"/>
        <end position="60"/>
    </location>
</feature>
<feature type="region of interest" description="Disordered" evidence="2">
    <location>
        <begin position="316"/>
        <end position="407"/>
    </location>
</feature>
<feature type="region of interest" description="Disordered" evidence="2">
    <location>
        <begin position="462"/>
        <end position="488"/>
    </location>
</feature>
<feature type="compositionally biased region" description="Gly residues" evidence="2">
    <location>
        <begin position="20"/>
        <end position="35"/>
    </location>
</feature>
<feature type="compositionally biased region" description="Gly residues" evidence="2">
    <location>
        <begin position="50"/>
        <end position="60"/>
    </location>
</feature>
<feature type="compositionally biased region" description="Low complexity" evidence="2">
    <location>
        <begin position="316"/>
        <end position="330"/>
    </location>
</feature>
<feature type="compositionally biased region" description="Polar residues" evidence="2">
    <location>
        <begin position="337"/>
        <end position="351"/>
    </location>
</feature>
<feature type="compositionally biased region" description="Low complexity" evidence="2">
    <location>
        <begin position="352"/>
        <end position="373"/>
    </location>
</feature>
<feature type="compositionally biased region" description="Low complexity" evidence="2">
    <location>
        <begin position="381"/>
        <end position="401"/>
    </location>
</feature>
<feature type="compositionally biased region" description="Low complexity" evidence="2">
    <location>
        <begin position="469"/>
        <end position="488"/>
    </location>
</feature>
<feature type="sequence conflict" description="In Ref. 1; AAB32396." evidence="4" ref="1">
    <original>E</original>
    <variation>G</variation>
    <location>
        <position position="321"/>
    </location>
</feature>
<feature type="sequence conflict" description="In Ref. 1; AAB32396." evidence="4" ref="1">
    <original>S</original>
    <variation>P</variation>
    <location>
        <position position="426"/>
    </location>
</feature>